<evidence type="ECO:0000255" key="1">
    <source>
        <dbReference type="HAMAP-Rule" id="MF_04064"/>
    </source>
</evidence>
<evidence type="ECO:0000256" key="2">
    <source>
        <dbReference type="SAM" id="MobiDB-lite"/>
    </source>
</evidence>
<gene>
    <name evidence="1" type="primary">PB1</name>
</gene>
<comment type="function">
    <text evidence="1">Plays an important role in promoting lung pathology in both primary viral infection and secondary bacterial infection. Promotes alteration of mitochondrial morphology, dissipation of mitochondrial membrane potential, and cell death. Alternatively, inhibits the production of interferon in the infected cell at the level of host mitochondrial antiviral signaling MAVS. Its level of expression differs greatly depending on which cell type is infected, in a manner that is independent of the levels of expression of other viral proteins. Monocytic cells are more affected than epithelial cells. Seems to disable virus-infected monocytes or other host innate immune cells. During early stage of infection, predisposes the mitochondria to permeability transition through interaction with host SLC25A6/ANT3 and VDAC1. These proteins participate in the formation of the permeability transition pore complex (PTPC) responsible of the release of mitochondrial products that triggers apoptosis.</text>
</comment>
<comment type="subunit">
    <text evidence="1">Oligomer. Interacts with human SLC25A6/ANT3 and VDAC1. Interacts with host MAVS.</text>
</comment>
<comment type="subcellular location">
    <subcellularLocation>
        <location evidence="1">Host mitochondrion inner membrane</location>
    </subcellularLocation>
    <subcellularLocation>
        <location evidence="1">Host nucleus</location>
    </subcellularLocation>
    <subcellularLocation>
        <location evidence="1">Host cytoplasm</location>
        <location evidence="1">Host cytosol</location>
    </subcellularLocation>
    <text evidence="1">Inner mitochondrial membrane in most cells types. Otherwise is detected in the nucleus and cytosol.</text>
</comment>
<comment type="miscellaneous">
    <text>Is not encoded in all strains, and seems to be dispensable for replication.</text>
</comment>
<comment type="similarity">
    <text evidence="1">Belongs to the influenza viruses PB1-F2 family.</text>
</comment>
<proteinExistence type="inferred from homology"/>
<name>PB1F2_I02A1</name>
<accession>P0C5V0</accession>
<reference key="1">
    <citation type="journal article" date="2004" name="Nature">
        <title>Genesis of a highly pathogenic and potentially pandemic H5N1 influenza virus in eastern Asia.</title>
        <authorList>
            <person name="Li K.S."/>
            <person name="Guan Y."/>
            <person name="Wang J."/>
            <person name="Smith G.J.D."/>
            <person name="Xu K.M."/>
            <person name="Duan L."/>
            <person name="Rahardjo A.P."/>
            <person name="Puthavathana P."/>
            <person name="Buranathai C."/>
            <person name="Nguyen T.D."/>
            <person name="Estoepangestie A.T.S."/>
            <person name="Chaisingh A."/>
            <person name="Auewarakul P."/>
            <person name="Long H.T."/>
            <person name="Hanh N.T.H."/>
            <person name="Webby R.J."/>
            <person name="Poon L.L.M."/>
            <person name="Chen H."/>
            <person name="Shortridge K.F."/>
            <person name="Yuen K.Y."/>
            <person name="Webster R.G."/>
            <person name="Peiris J.S.M."/>
        </authorList>
    </citation>
    <scope>NUCLEOTIDE SEQUENCE [GENOMIC RNA]</scope>
</reference>
<organismHost>
    <name type="scientific">Aves</name>
    <dbReference type="NCBI Taxonomy" id="8782"/>
</organismHost>
<organismHost>
    <name type="scientific">Felis catus</name>
    <name type="common">Cat</name>
    <name type="synonym">Felis silvestris catus</name>
    <dbReference type="NCBI Taxonomy" id="9685"/>
</organismHost>
<organismHost>
    <name type="scientific">Homo sapiens</name>
    <name type="common">Human</name>
    <dbReference type="NCBI Taxonomy" id="9606"/>
</organismHost>
<organismHost>
    <name type="scientific">Panthera pardus</name>
    <name type="common">Leopard</name>
    <name type="synonym">Felis pardus</name>
    <dbReference type="NCBI Taxonomy" id="9691"/>
</organismHost>
<organismHost>
    <name type="scientific">Panthera tigris</name>
    <name type="common">Tiger</name>
    <dbReference type="NCBI Taxonomy" id="9694"/>
</organismHost>
<organismHost>
    <name type="scientific">Sus scrofa</name>
    <name type="common">Pig</name>
    <dbReference type="NCBI Taxonomy" id="9823"/>
</organismHost>
<feature type="chain" id="PRO_0000311641" description="Protein PB1-F2">
    <location>
        <begin position="1"/>
        <end position="90"/>
    </location>
</feature>
<feature type="region of interest" description="Disordered" evidence="2">
    <location>
        <begin position="1"/>
        <end position="34"/>
    </location>
</feature>
<feature type="region of interest" description="Mitochondrial targeting sequence" evidence="1">
    <location>
        <begin position="65"/>
        <end position="87"/>
    </location>
</feature>
<feature type="compositionally biased region" description="Polar residues" evidence="2">
    <location>
        <begin position="1"/>
        <end position="28"/>
    </location>
</feature>
<feature type="site" description="Low pathogenicity" evidence="1">
    <location>
        <position position="66"/>
    </location>
</feature>
<sequence length="90" mass="10836">MEQEQDTPWTRSIEHINTQRRGNGQQTPKLEHPNSIQLMDHYPRITSRADMHKQIVCWKQWLSSKNPTQGSLKTHVLKRWKLFSKQEWTN</sequence>
<dbReference type="EMBL" id="AY651676">
    <property type="status" value="NOT_ANNOTATED_CDS"/>
    <property type="molecule type" value="Genomic_RNA"/>
</dbReference>
<dbReference type="SMR" id="P0C5V0"/>
<dbReference type="GO" id="GO:0044164">
    <property type="term" value="C:host cell cytosol"/>
    <property type="evidence" value="ECO:0007669"/>
    <property type="project" value="UniProtKB-SubCell"/>
</dbReference>
<dbReference type="GO" id="GO:0044192">
    <property type="term" value="C:host cell mitochondrial inner membrane"/>
    <property type="evidence" value="ECO:0007669"/>
    <property type="project" value="UniProtKB-SubCell"/>
</dbReference>
<dbReference type="GO" id="GO:0042025">
    <property type="term" value="C:host cell nucleus"/>
    <property type="evidence" value="ECO:0007669"/>
    <property type="project" value="UniProtKB-SubCell"/>
</dbReference>
<dbReference type="GO" id="GO:0016020">
    <property type="term" value="C:membrane"/>
    <property type="evidence" value="ECO:0007669"/>
    <property type="project" value="UniProtKB-UniRule"/>
</dbReference>
<dbReference type="GO" id="GO:0052150">
    <property type="term" value="P:symbiont-mediated perturbation of host apoptosis"/>
    <property type="evidence" value="ECO:0007669"/>
    <property type="project" value="UniProtKB-KW"/>
</dbReference>
<dbReference type="GO" id="GO:0039545">
    <property type="term" value="P:symbiont-mediated suppression of host cytoplasmic pattern recognition receptor signaling pathway via inhibition of MAVS activity"/>
    <property type="evidence" value="ECO:0007669"/>
    <property type="project" value="UniProtKB-KW"/>
</dbReference>
<dbReference type="HAMAP" id="MF_04064">
    <property type="entry name" value="INFV_PB1F2"/>
    <property type="match status" value="1"/>
</dbReference>
<dbReference type="InterPro" id="IPR021045">
    <property type="entry name" value="Flu_proapoptotic_PB1-F2"/>
</dbReference>
<dbReference type="Pfam" id="PF11986">
    <property type="entry name" value="PB1-F2"/>
    <property type="match status" value="1"/>
</dbReference>
<organism>
    <name type="scientific">Influenza A virus (strain A/Guinea fowl/Hong Kong/38/2002 H5N1 genotype X0)</name>
    <dbReference type="NCBI Taxonomy" id="284208"/>
    <lineage>
        <taxon>Viruses</taxon>
        <taxon>Riboviria</taxon>
        <taxon>Orthornavirae</taxon>
        <taxon>Negarnaviricota</taxon>
        <taxon>Polyploviricotina</taxon>
        <taxon>Insthoviricetes</taxon>
        <taxon>Articulavirales</taxon>
        <taxon>Orthomyxoviridae</taxon>
        <taxon>Alphainfluenzavirus</taxon>
        <taxon>Alphainfluenzavirus influenzae</taxon>
        <taxon>Influenza A virus</taxon>
    </lineage>
</organism>
<protein>
    <recommendedName>
        <fullName evidence="1">Protein PB1-F2</fullName>
    </recommendedName>
</protein>
<keyword id="KW-0053">Apoptosis</keyword>
<keyword id="KW-1035">Host cytoplasm</keyword>
<keyword id="KW-1043">Host membrane</keyword>
<keyword id="KW-1045">Host mitochondrion</keyword>
<keyword id="KW-1046">Host mitochondrion inner membrane</keyword>
<keyword id="KW-1048">Host nucleus</keyword>
<keyword id="KW-0945">Host-virus interaction</keyword>
<keyword id="KW-1090">Inhibition of host innate immune response by virus</keyword>
<keyword id="KW-1097">Inhibition of host MAVS by virus</keyword>
<keyword id="KW-1113">Inhibition of host RLR pathway by virus</keyword>
<keyword id="KW-0472">Membrane</keyword>
<keyword id="KW-1119">Modulation of host cell apoptosis by virus</keyword>
<keyword id="KW-0899">Viral immunoevasion</keyword>